<reference key="1">
    <citation type="journal article" date="2005" name="Science">
        <title>The transcriptional landscape of the mammalian genome.</title>
        <authorList>
            <person name="Carninci P."/>
            <person name="Kasukawa T."/>
            <person name="Katayama S."/>
            <person name="Gough J."/>
            <person name="Frith M.C."/>
            <person name="Maeda N."/>
            <person name="Oyama R."/>
            <person name="Ravasi T."/>
            <person name="Lenhard B."/>
            <person name="Wells C."/>
            <person name="Kodzius R."/>
            <person name="Shimokawa K."/>
            <person name="Bajic V.B."/>
            <person name="Brenner S.E."/>
            <person name="Batalov S."/>
            <person name="Forrest A.R."/>
            <person name="Zavolan M."/>
            <person name="Davis M.J."/>
            <person name="Wilming L.G."/>
            <person name="Aidinis V."/>
            <person name="Allen J.E."/>
            <person name="Ambesi-Impiombato A."/>
            <person name="Apweiler R."/>
            <person name="Aturaliya R.N."/>
            <person name="Bailey T.L."/>
            <person name="Bansal M."/>
            <person name="Baxter L."/>
            <person name="Beisel K.W."/>
            <person name="Bersano T."/>
            <person name="Bono H."/>
            <person name="Chalk A.M."/>
            <person name="Chiu K.P."/>
            <person name="Choudhary V."/>
            <person name="Christoffels A."/>
            <person name="Clutterbuck D.R."/>
            <person name="Crowe M.L."/>
            <person name="Dalla E."/>
            <person name="Dalrymple B.P."/>
            <person name="de Bono B."/>
            <person name="Della Gatta G."/>
            <person name="di Bernardo D."/>
            <person name="Down T."/>
            <person name="Engstrom P."/>
            <person name="Fagiolini M."/>
            <person name="Faulkner G."/>
            <person name="Fletcher C.F."/>
            <person name="Fukushima T."/>
            <person name="Furuno M."/>
            <person name="Futaki S."/>
            <person name="Gariboldi M."/>
            <person name="Georgii-Hemming P."/>
            <person name="Gingeras T.R."/>
            <person name="Gojobori T."/>
            <person name="Green R.E."/>
            <person name="Gustincich S."/>
            <person name="Harbers M."/>
            <person name="Hayashi Y."/>
            <person name="Hensch T.K."/>
            <person name="Hirokawa N."/>
            <person name="Hill D."/>
            <person name="Huminiecki L."/>
            <person name="Iacono M."/>
            <person name="Ikeo K."/>
            <person name="Iwama A."/>
            <person name="Ishikawa T."/>
            <person name="Jakt M."/>
            <person name="Kanapin A."/>
            <person name="Katoh M."/>
            <person name="Kawasawa Y."/>
            <person name="Kelso J."/>
            <person name="Kitamura H."/>
            <person name="Kitano H."/>
            <person name="Kollias G."/>
            <person name="Krishnan S.P."/>
            <person name="Kruger A."/>
            <person name="Kummerfeld S.K."/>
            <person name="Kurochkin I.V."/>
            <person name="Lareau L.F."/>
            <person name="Lazarevic D."/>
            <person name="Lipovich L."/>
            <person name="Liu J."/>
            <person name="Liuni S."/>
            <person name="McWilliam S."/>
            <person name="Madan Babu M."/>
            <person name="Madera M."/>
            <person name="Marchionni L."/>
            <person name="Matsuda H."/>
            <person name="Matsuzawa S."/>
            <person name="Miki H."/>
            <person name="Mignone F."/>
            <person name="Miyake S."/>
            <person name="Morris K."/>
            <person name="Mottagui-Tabar S."/>
            <person name="Mulder N."/>
            <person name="Nakano N."/>
            <person name="Nakauchi H."/>
            <person name="Ng P."/>
            <person name="Nilsson R."/>
            <person name="Nishiguchi S."/>
            <person name="Nishikawa S."/>
            <person name="Nori F."/>
            <person name="Ohara O."/>
            <person name="Okazaki Y."/>
            <person name="Orlando V."/>
            <person name="Pang K.C."/>
            <person name="Pavan W.J."/>
            <person name="Pavesi G."/>
            <person name="Pesole G."/>
            <person name="Petrovsky N."/>
            <person name="Piazza S."/>
            <person name="Reed J."/>
            <person name="Reid J.F."/>
            <person name="Ring B.Z."/>
            <person name="Ringwald M."/>
            <person name="Rost B."/>
            <person name="Ruan Y."/>
            <person name="Salzberg S.L."/>
            <person name="Sandelin A."/>
            <person name="Schneider C."/>
            <person name="Schoenbach C."/>
            <person name="Sekiguchi K."/>
            <person name="Semple C.A."/>
            <person name="Seno S."/>
            <person name="Sessa L."/>
            <person name="Sheng Y."/>
            <person name="Shibata Y."/>
            <person name="Shimada H."/>
            <person name="Shimada K."/>
            <person name="Silva D."/>
            <person name="Sinclair B."/>
            <person name="Sperling S."/>
            <person name="Stupka E."/>
            <person name="Sugiura K."/>
            <person name="Sultana R."/>
            <person name="Takenaka Y."/>
            <person name="Taki K."/>
            <person name="Tammoja K."/>
            <person name="Tan S.L."/>
            <person name="Tang S."/>
            <person name="Taylor M.S."/>
            <person name="Tegner J."/>
            <person name="Teichmann S.A."/>
            <person name="Ueda H.R."/>
            <person name="van Nimwegen E."/>
            <person name="Verardo R."/>
            <person name="Wei C.L."/>
            <person name="Yagi K."/>
            <person name="Yamanishi H."/>
            <person name="Zabarovsky E."/>
            <person name="Zhu S."/>
            <person name="Zimmer A."/>
            <person name="Hide W."/>
            <person name="Bult C."/>
            <person name="Grimmond S.M."/>
            <person name="Teasdale R.D."/>
            <person name="Liu E.T."/>
            <person name="Brusic V."/>
            <person name="Quackenbush J."/>
            <person name="Wahlestedt C."/>
            <person name="Mattick J.S."/>
            <person name="Hume D.A."/>
            <person name="Kai C."/>
            <person name="Sasaki D."/>
            <person name="Tomaru Y."/>
            <person name="Fukuda S."/>
            <person name="Kanamori-Katayama M."/>
            <person name="Suzuki M."/>
            <person name="Aoki J."/>
            <person name="Arakawa T."/>
            <person name="Iida J."/>
            <person name="Imamura K."/>
            <person name="Itoh M."/>
            <person name="Kato T."/>
            <person name="Kawaji H."/>
            <person name="Kawagashira N."/>
            <person name="Kawashima T."/>
            <person name="Kojima M."/>
            <person name="Kondo S."/>
            <person name="Konno H."/>
            <person name="Nakano K."/>
            <person name="Ninomiya N."/>
            <person name="Nishio T."/>
            <person name="Okada M."/>
            <person name="Plessy C."/>
            <person name="Shibata K."/>
            <person name="Shiraki T."/>
            <person name="Suzuki S."/>
            <person name="Tagami M."/>
            <person name="Waki K."/>
            <person name="Watahiki A."/>
            <person name="Okamura-Oho Y."/>
            <person name="Suzuki H."/>
            <person name="Kawai J."/>
            <person name="Hayashizaki Y."/>
        </authorList>
    </citation>
    <scope>NUCLEOTIDE SEQUENCE [LARGE SCALE MRNA]</scope>
</reference>
<reference key="2">
    <citation type="journal article" date="2009" name="PLoS Biol.">
        <title>Lineage-specific biology revealed by a finished genome assembly of the mouse.</title>
        <authorList>
            <person name="Church D.M."/>
            <person name="Goodstadt L."/>
            <person name="Hillier L.W."/>
            <person name="Zody M.C."/>
            <person name="Goldstein S."/>
            <person name="She X."/>
            <person name="Bult C.J."/>
            <person name="Agarwala R."/>
            <person name="Cherry J.L."/>
            <person name="DiCuccio M."/>
            <person name="Hlavina W."/>
            <person name="Kapustin Y."/>
            <person name="Meric P."/>
            <person name="Maglott D."/>
            <person name="Birtle Z."/>
            <person name="Marques A.C."/>
            <person name="Graves T."/>
            <person name="Zhou S."/>
            <person name="Teague B."/>
            <person name="Potamousis K."/>
            <person name="Churas C."/>
            <person name="Place M."/>
            <person name="Herschleb J."/>
            <person name="Runnheim R."/>
            <person name="Forrest D."/>
            <person name="Amos-Landgraf J."/>
            <person name="Schwartz D.C."/>
            <person name="Cheng Z."/>
            <person name="Lindblad-Toh K."/>
            <person name="Eichler E.E."/>
            <person name="Ponting C.P."/>
        </authorList>
    </citation>
    <scope>NUCLEOTIDE SEQUENCE [LARGE SCALE GENOMIC DNA]</scope>
    <source>
        <strain>C57BL/6J</strain>
    </source>
</reference>
<reference key="3">
    <citation type="submission" date="2005-09" db="EMBL/GenBank/DDBJ databases">
        <authorList>
            <person name="Mural R.J."/>
            <person name="Adams M.D."/>
            <person name="Myers E.W."/>
            <person name="Smith H.O."/>
            <person name="Venter J.C."/>
        </authorList>
    </citation>
    <scope>NUCLEOTIDE SEQUENCE [LARGE SCALE GENOMIC DNA]</scope>
</reference>
<name>P3URF_MOUSE</name>
<evidence type="ECO:0000256" key="1">
    <source>
        <dbReference type="SAM" id="MobiDB-lite"/>
    </source>
</evidence>
<evidence type="ECO:0000312" key="2">
    <source>
        <dbReference type="MGI" id="MGI:1914573"/>
    </source>
</evidence>
<gene>
    <name evidence="2" type="primary">P3r3urf</name>
</gene>
<dbReference type="EMBL" id="AK006685">
    <property type="status" value="NOT_ANNOTATED_CDS"/>
    <property type="molecule type" value="mRNA"/>
</dbReference>
<dbReference type="EMBL" id="AL670603">
    <property type="status" value="NOT_ANNOTATED_CDS"/>
    <property type="molecule type" value="Genomic_DNA"/>
</dbReference>
<dbReference type="EMBL" id="CH466552">
    <property type="protein sequence ID" value="EDL30613.1"/>
    <property type="molecule type" value="Genomic_DNA"/>
</dbReference>
<dbReference type="CCDS" id="CCDS51276.1"/>
<dbReference type="RefSeq" id="NP_001092765.1">
    <property type="nucleotide sequence ID" value="NM_001099295.2"/>
</dbReference>
<dbReference type="STRING" id="10090.ENSMUSP00000102101"/>
<dbReference type="GlyGen" id="B1AUF7">
    <property type="glycosylation" value="1 site"/>
</dbReference>
<dbReference type="PaxDb" id="10090-ENSMUSP00000102101"/>
<dbReference type="ProteomicsDB" id="336617"/>
<dbReference type="Ensembl" id="ENSMUST00000106492.3">
    <property type="protein sequence ID" value="ENSMUSP00000102101.3"/>
    <property type="gene ID" value="ENSMUSG00000078593.3"/>
</dbReference>
<dbReference type="GeneID" id="67323"/>
<dbReference type="KEGG" id="mmu:67323"/>
<dbReference type="UCSC" id="uc008ugl.2">
    <property type="organism name" value="mouse"/>
</dbReference>
<dbReference type="AGR" id="MGI:1914573"/>
<dbReference type="CTD" id="110117498"/>
<dbReference type="MGI" id="MGI:1914573">
    <property type="gene designation" value="P3r3urf"/>
</dbReference>
<dbReference type="VEuPathDB" id="HostDB:ENSMUSG00000078593"/>
<dbReference type="eggNOG" id="KOG4637">
    <property type="taxonomic scope" value="Eukaryota"/>
</dbReference>
<dbReference type="GeneTree" id="ENSGT00700000106049"/>
<dbReference type="HOGENOM" id="CLU_2372156_0_0_1"/>
<dbReference type="InParanoid" id="B1AUF7"/>
<dbReference type="OMA" id="PGIGWPR"/>
<dbReference type="OrthoDB" id="9517304at2759"/>
<dbReference type="BioGRID-ORCS" id="67323">
    <property type="hits" value="0 hits in 76 CRISPR screens"/>
</dbReference>
<dbReference type="PRO" id="PR:B1AUF7"/>
<dbReference type="Proteomes" id="UP000000589">
    <property type="component" value="Chromosome 4"/>
</dbReference>
<dbReference type="RNAct" id="B1AUF7">
    <property type="molecule type" value="protein"/>
</dbReference>
<dbReference type="Bgee" id="ENSMUSG00000078593">
    <property type="expression patterns" value="Expressed in testis and 11 other cell types or tissues"/>
</dbReference>
<sequence>MGPSQLVRAPRPPGLTSPYRRPGMGGPRRRCPSMFKCSRRTYRQKPRGPTATNPASEATNISDTDTTTSVLILSPRVLRFLCQPGGFLVL</sequence>
<organism>
    <name type="scientific">Mus musculus</name>
    <name type="common">Mouse</name>
    <dbReference type="NCBI Taxonomy" id="10090"/>
    <lineage>
        <taxon>Eukaryota</taxon>
        <taxon>Metazoa</taxon>
        <taxon>Chordata</taxon>
        <taxon>Craniata</taxon>
        <taxon>Vertebrata</taxon>
        <taxon>Euteleostomi</taxon>
        <taxon>Mammalia</taxon>
        <taxon>Eutheria</taxon>
        <taxon>Euarchontoglires</taxon>
        <taxon>Glires</taxon>
        <taxon>Rodentia</taxon>
        <taxon>Myomorpha</taxon>
        <taxon>Muroidea</taxon>
        <taxon>Muridae</taxon>
        <taxon>Murinae</taxon>
        <taxon>Mus</taxon>
        <taxon>Mus</taxon>
    </lineage>
</organism>
<accession>B1AUF7</accession>
<proteinExistence type="predicted"/>
<protein>
    <recommendedName>
        <fullName>PIK3R3 upstream open reading frame protein</fullName>
    </recommendedName>
</protein>
<feature type="chain" id="PRO_0000446329" description="PIK3R3 upstream open reading frame protein">
    <location>
        <begin position="1"/>
        <end position="90"/>
    </location>
</feature>
<feature type="region of interest" description="Disordered" evidence="1">
    <location>
        <begin position="1"/>
        <end position="63"/>
    </location>
</feature>
<feature type="compositionally biased region" description="Basic residues" evidence="1">
    <location>
        <begin position="27"/>
        <end position="46"/>
    </location>
</feature>
<feature type="compositionally biased region" description="Polar residues" evidence="1">
    <location>
        <begin position="50"/>
        <end position="63"/>
    </location>
</feature>
<keyword id="KW-1185">Reference proteome</keyword>